<reference key="1">
    <citation type="journal article" date="2007" name="PLoS ONE">
        <title>Analysis of the neurotoxin complex genes in Clostridium botulinum A1-A4 and B1 strains: BoNT/A3, /Ba4 and /B1 clusters are located within plasmids.</title>
        <authorList>
            <person name="Smith T.J."/>
            <person name="Hill K.K."/>
            <person name="Foley B.T."/>
            <person name="Detter J.C."/>
            <person name="Munk A.C."/>
            <person name="Bruce D.C."/>
            <person name="Doggett N.A."/>
            <person name="Smith L.A."/>
            <person name="Marks J.D."/>
            <person name="Xie G."/>
            <person name="Brettin T.S."/>
        </authorList>
    </citation>
    <scope>NUCLEOTIDE SEQUENCE [LARGE SCALE GENOMIC DNA]</scope>
    <source>
        <strain>Loch Maree / Type A3</strain>
    </source>
</reference>
<name>Y2394_CLOBM</name>
<sequence>MPNKFLIIDNSILPDIFEKVVKVKELLANGKVKDITEGVKTVGISRSTYYKYKDFVFSVSEGVKSQKATIGLLLGHERGTLSKILDRIAEYQGNILTINQDIPINNTANVSITFDISQMSIGLKELVEEIKNTKNVIKVDLIAME</sequence>
<protein>
    <recommendedName>
        <fullName evidence="1">UPF0735 ACT domain-containing protein CLK_2394</fullName>
    </recommendedName>
</protein>
<gene>
    <name type="ordered locus">CLK_2394</name>
</gene>
<comment type="similarity">
    <text evidence="1">Belongs to the UPF0735 family.</text>
</comment>
<proteinExistence type="inferred from homology"/>
<accession>B1KZT7</accession>
<organism>
    <name type="scientific">Clostridium botulinum (strain Loch Maree / Type A3)</name>
    <dbReference type="NCBI Taxonomy" id="498214"/>
    <lineage>
        <taxon>Bacteria</taxon>
        <taxon>Bacillati</taxon>
        <taxon>Bacillota</taxon>
        <taxon>Clostridia</taxon>
        <taxon>Eubacteriales</taxon>
        <taxon>Clostridiaceae</taxon>
        <taxon>Clostridium</taxon>
    </lineage>
</organism>
<evidence type="ECO:0000255" key="1">
    <source>
        <dbReference type="HAMAP-Rule" id="MF_00707"/>
    </source>
</evidence>
<feature type="chain" id="PRO_0000366303" description="UPF0735 ACT domain-containing protein CLK_2394">
    <location>
        <begin position="1"/>
        <end position="145"/>
    </location>
</feature>
<feature type="domain" description="ACT" evidence="1">
    <location>
        <begin position="69"/>
        <end position="144"/>
    </location>
</feature>
<dbReference type="EMBL" id="CP000962">
    <property type="protein sequence ID" value="ACA57132.1"/>
    <property type="molecule type" value="Genomic_DNA"/>
</dbReference>
<dbReference type="RefSeq" id="WP_003357848.1">
    <property type="nucleotide sequence ID" value="NC_010520.1"/>
</dbReference>
<dbReference type="KEGG" id="cbl:CLK_2394"/>
<dbReference type="HOGENOM" id="CLU_128147_0_0_9"/>
<dbReference type="CDD" id="cd04888">
    <property type="entry name" value="ACT_PheB-BS"/>
    <property type="match status" value="1"/>
</dbReference>
<dbReference type="Gene3D" id="3.30.70.260">
    <property type="match status" value="1"/>
</dbReference>
<dbReference type="HAMAP" id="MF_00707">
    <property type="entry name" value="UPF0735"/>
    <property type="match status" value="1"/>
</dbReference>
<dbReference type="InterPro" id="IPR045865">
    <property type="entry name" value="ACT-like_dom_sf"/>
</dbReference>
<dbReference type="InterPro" id="IPR002912">
    <property type="entry name" value="ACT_dom"/>
</dbReference>
<dbReference type="InterPro" id="IPR008310">
    <property type="entry name" value="UPF0735_ACT_dom-cont"/>
</dbReference>
<dbReference type="NCBIfam" id="NF003361">
    <property type="entry name" value="PRK04435.1"/>
    <property type="match status" value="1"/>
</dbReference>
<dbReference type="Pfam" id="PF13291">
    <property type="entry name" value="ACT_4"/>
    <property type="match status" value="1"/>
</dbReference>
<dbReference type="PIRSF" id="PIRSF025624">
    <property type="entry name" value="ACT_PheB"/>
    <property type="match status" value="1"/>
</dbReference>
<dbReference type="SUPFAM" id="SSF55021">
    <property type="entry name" value="ACT-like"/>
    <property type="match status" value="1"/>
</dbReference>
<dbReference type="PROSITE" id="PS51671">
    <property type="entry name" value="ACT"/>
    <property type="match status" value="1"/>
</dbReference>